<comment type="function">
    <text evidence="2 3 4">Required for the activation of lactoyl-CoA dehydratase. This protein is extremely sensitive towards oxygen.</text>
</comment>
<comment type="cofactor">
    <cofactor evidence="1">
        <name>[4Fe-4S] cluster</name>
        <dbReference type="ChEBI" id="CHEBI:49883"/>
    </cofactor>
    <text evidence="1">Binds 1 [4Fe-4S] cluster per dimer.</text>
</comment>
<comment type="subunit">
    <text evidence="1">Homodimer.</text>
</comment>
<dbReference type="EMBL" id="JN244653">
    <property type="protein sequence ID" value="AEM62995.1"/>
    <property type="molecule type" value="Genomic_DNA"/>
</dbReference>
<dbReference type="RefSeq" id="WP_066048110.1">
    <property type="nucleotide sequence ID" value="NZ_JAYFOE010000006.1"/>
</dbReference>
<dbReference type="SMR" id="G3KIM5"/>
<dbReference type="BioCyc" id="MetaCyc:EICOMP-MONOMER"/>
<dbReference type="GO" id="GO:0051539">
    <property type="term" value="F:4 iron, 4 sulfur cluster binding"/>
    <property type="evidence" value="ECO:0007669"/>
    <property type="project" value="UniProtKB-KW"/>
</dbReference>
<dbReference type="GO" id="GO:0018819">
    <property type="term" value="F:lactoyl-CoA dehydratase activity"/>
    <property type="evidence" value="ECO:0000314"/>
    <property type="project" value="UniProtKB"/>
</dbReference>
<dbReference type="GO" id="GO:0046872">
    <property type="term" value="F:metal ion binding"/>
    <property type="evidence" value="ECO:0007669"/>
    <property type="project" value="UniProtKB-KW"/>
</dbReference>
<dbReference type="CDD" id="cd24103">
    <property type="entry name" value="ASKHA_NBD_HgdC_HadI-like"/>
    <property type="match status" value="1"/>
</dbReference>
<dbReference type="FunFam" id="3.30.420.40:FF:000217">
    <property type="entry name" value="2-hydroxyisocaproyl-CoA dehydratase activator"/>
    <property type="match status" value="1"/>
</dbReference>
<dbReference type="Gene3D" id="3.30.420.40">
    <property type="match status" value="2"/>
</dbReference>
<dbReference type="InterPro" id="IPR002731">
    <property type="entry name" value="ATPase_BadF"/>
</dbReference>
<dbReference type="InterPro" id="IPR043129">
    <property type="entry name" value="ATPase_NBD"/>
</dbReference>
<dbReference type="InterPro" id="IPR008275">
    <property type="entry name" value="CoA_E_activase_dom"/>
</dbReference>
<dbReference type="InterPro" id="IPR051805">
    <property type="entry name" value="Dehydratase_Activator_Redct"/>
</dbReference>
<dbReference type="NCBIfam" id="TIGR00241">
    <property type="entry name" value="CoA_E_activ"/>
    <property type="match status" value="1"/>
</dbReference>
<dbReference type="PANTHER" id="PTHR32329:SF2">
    <property type="entry name" value="BIFUNCTIONAL PROTEIN [INCLUDES 2-HYDROXYACYL-COA DEHYDRATASE (N-TER) AND ITS ACTIVATOR DOMAIN (C_TERM)"/>
    <property type="match status" value="1"/>
</dbReference>
<dbReference type="PANTHER" id="PTHR32329">
    <property type="entry name" value="BIFUNCTIONAL PROTEIN [INCLUDES 2-HYDROXYACYL-COA DEHYDRATASE (N-TER) AND ITS ACTIVATOR DOMAIN (C_TERM)-RELATED"/>
    <property type="match status" value="1"/>
</dbReference>
<dbReference type="Pfam" id="PF01869">
    <property type="entry name" value="BcrAD_BadFG"/>
    <property type="match status" value="1"/>
</dbReference>
<dbReference type="SUPFAM" id="SSF53067">
    <property type="entry name" value="Actin-like ATPase domain"/>
    <property type="match status" value="1"/>
</dbReference>
<keyword id="KW-0004">4Fe-4S</keyword>
<keyword id="KW-0408">Iron</keyword>
<keyword id="KW-0411">Iron-sulfur</keyword>
<keyword id="KW-0479">Metal-binding</keyword>
<gene>
    <name type="primary">lcdC</name>
</gene>
<proteinExistence type="evidence at protein level"/>
<name>LCDC_ANAPI</name>
<organism>
    <name type="scientific">Anaerotignum propionicum</name>
    <name type="common">Clostridium propionicum</name>
    <dbReference type="NCBI Taxonomy" id="28446"/>
    <lineage>
        <taxon>Bacteria</taxon>
        <taxon>Bacillati</taxon>
        <taxon>Bacillota</taxon>
        <taxon>Clostridia</taxon>
        <taxon>Lachnospirales</taxon>
        <taxon>Anaerotignaceae</taxon>
        <taxon>Anaerotignum</taxon>
    </lineage>
</organism>
<accession>G3KIM5</accession>
<evidence type="ECO:0000250" key="1"/>
<evidence type="ECO:0000269" key="2">
    <source>
    </source>
</evidence>
<evidence type="ECO:0000269" key="3">
    <source>
    </source>
</evidence>
<evidence type="ECO:0000269" key="4">
    <source>
    </source>
</evidence>
<protein>
    <recommendedName>
        <fullName>Activator of lactoyl-CoA dehydratase</fullName>
    </recommendedName>
    <alternativeName>
        <fullName>Lactoyl-CoA dehydratase component E I</fullName>
    </alternativeName>
</protein>
<reference key="1">
    <citation type="submission" date="2011-07" db="EMBL/GenBank/DDBJ databases">
        <authorList>
            <person name="Poehlein A."/>
            <person name="Schlien K."/>
            <person name="Daniel R."/>
            <person name="Gottschalk G."/>
            <person name="Buckel W."/>
        </authorList>
    </citation>
    <scope>NUCLEOTIDE SEQUENCE [GENOMIC DNA]</scope>
    <source>
        <strain>ATCC 25522 / DSM 1682 / JCM 1430 / NCIMB 10656 / VPI 5303 / X2</strain>
    </source>
</reference>
<reference key="2">
    <citation type="journal article" date="1985" name="J. Biol. Chem.">
        <title>Lactate reduction in Clostridium propionicum. Purification and properties of lactyl-CoA dehydratase.</title>
        <authorList>
            <person name="Kuchta R.D."/>
            <person name="Abeles R.H."/>
        </authorList>
    </citation>
    <scope>FUNCTION</scope>
</reference>
<reference key="3">
    <citation type="journal article" date="1992" name="Eur. J. Biochem.">
        <title>(R)-lactyl-CoA dehydratase from Clostridium propionicum. Stereochemistry of the dehydration of (R)-2-hydroxybutyryl-CoA to crotonyl-CoA.</title>
        <authorList>
            <person name="Hofmeister A.E."/>
            <person name="Buckel W."/>
        </authorList>
    </citation>
    <scope>FUNCTION</scope>
</reference>
<reference key="4">
    <citation type="journal article" date="2013" name="Appl. Microbiol. Biotechnol.">
        <title>Engineering Escherichia coli with acrylate pathway genes for propionic acid synthesis and its impact on mixed-acid fermentation.</title>
        <authorList>
            <person name="Kandasamy V."/>
            <person name="Vaidyanathan H."/>
            <person name="Djurdjevic I."/>
            <person name="Jayamani E."/>
            <person name="Ramachandran K.B."/>
            <person name="Buckel W."/>
            <person name="Jayaraman G."/>
            <person name="Ramalingam S."/>
        </authorList>
    </citation>
    <scope>FUNCTION IN THE ACRYLATE PATHWAY</scope>
</reference>
<feature type="chain" id="PRO_0000419611" description="Activator of lactoyl-CoA dehydratase">
    <location>
        <begin position="1" status="less than"/>
        <end position="259"/>
    </location>
</feature>
<feature type="binding site" evidence="1">
    <location>
        <position position="125"/>
    </location>
    <ligand>
        <name>[4Fe-4S] cluster</name>
        <dbReference type="ChEBI" id="CHEBI:49883"/>
        <note>ligand shared between dimeric partners</note>
    </ligand>
</feature>
<feature type="binding site" evidence="1">
    <location>
        <position position="164"/>
    </location>
    <ligand>
        <name>[4Fe-4S] cluster</name>
        <dbReference type="ChEBI" id="CHEBI:49883"/>
        <note>ligand shared between dimeric partners</note>
    </ligand>
</feature>
<feature type="non-terminal residue">
    <location>
        <position position="1"/>
    </location>
</feature>
<sequence>MYTLGIDVGSASSKAVILKDGKDIVAAEVVQVGTGSSGPQRALDKAFEVSGLKKEDISYTVATGYGRFNFSDADKQISEISCHAKGIYFLVPTARTIIDIGGQDAKAIRLDDKGGIKQFFMNDKCAAGTGRFLEVMARVLETTLDEMAELDEQATDTAPISSTCTVFAESEVISQLSNGVSRNNIIKGVHLSVASRACGLAYRGGLEKDVVMTGGVAKNAGVVRAVAGVLKTDVIVAPNPQTTGALGAALYAYEAAQKK</sequence>